<accession>Q6DN61</accession>
<proteinExistence type="inferred from homology"/>
<keyword id="KW-0066">ATP synthesis</keyword>
<keyword id="KW-0138">CF(0)</keyword>
<keyword id="KW-0375">Hydrogen ion transport</keyword>
<keyword id="KW-0406">Ion transport</keyword>
<keyword id="KW-0472">Membrane</keyword>
<keyword id="KW-0496">Mitochondrion</keyword>
<keyword id="KW-0999">Mitochondrion inner membrane</keyword>
<keyword id="KW-0812">Transmembrane</keyword>
<keyword id="KW-1133">Transmembrane helix</keyword>
<keyword id="KW-0813">Transport</keyword>
<protein>
    <recommendedName>
        <fullName>ATP synthase subunit a</fullName>
    </recommendedName>
    <alternativeName>
        <fullName>ATP synthase subunit 6</fullName>
    </alternativeName>
    <alternativeName>
        <fullName>F-ATPase protein 6</fullName>
    </alternativeName>
</protein>
<feature type="propeptide" id="PRO_0000002614" description="Removed in mature form" evidence="1">
    <location>
        <begin position="1"/>
        <end position="7"/>
    </location>
</feature>
<feature type="chain" id="PRO_0000002615" description="ATP synthase subunit a">
    <location>
        <begin position="8"/>
        <end position="256"/>
    </location>
</feature>
<feature type="transmembrane region" description="Helical" evidence="2">
    <location>
        <begin position="33"/>
        <end position="53"/>
    </location>
</feature>
<feature type="transmembrane region" description="Helical" evidence="2">
    <location>
        <begin position="92"/>
        <end position="112"/>
    </location>
</feature>
<feature type="transmembrane region" description="Helical" evidence="2">
    <location>
        <begin position="122"/>
        <end position="142"/>
    </location>
</feature>
<feature type="transmembrane region" description="Helical" evidence="2">
    <location>
        <begin position="148"/>
        <end position="168"/>
    </location>
</feature>
<feature type="transmembrane region" description="Helical" evidence="2">
    <location>
        <begin position="188"/>
        <end position="208"/>
    </location>
</feature>
<feature type="transmembrane region" description="Helical" evidence="2">
    <location>
        <begin position="209"/>
        <end position="229"/>
    </location>
</feature>
<dbReference type="EMBL" id="AY654900">
    <property type="protein sequence ID" value="AAT64951.1"/>
    <property type="molecule type" value="Genomic_DNA"/>
</dbReference>
<dbReference type="RefSeq" id="YP_054498.1">
    <property type="nucleotide sequence ID" value="NC_006077.1"/>
</dbReference>
<dbReference type="SMR" id="Q6DN61"/>
<dbReference type="FunCoup" id="Q6DN61">
    <property type="interactions" value="272"/>
</dbReference>
<dbReference type="STRING" id="284590.Q6DN61"/>
<dbReference type="PaxDb" id="284590-Q6DN61"/>
<dbReference type="GeneID" id="2914052"/>
<dbReference type="KEGG" id="kla:KllafMp03"/>
<dbReference type="InParanoid" id="Q6DN61"/>
<dbReference type="GO" id="GO:0005743">
    <property type="term" value="C:mitochondrial inner membrane"/>
    <property type="evidence" value="ECO:0007669"/>
    <property type="project" value="UniProtKB-SubCell"/>
</dbReference>
<dbReference type="GO" id="GO:0045259">
    <property type="term" value="C:proton-transporting ATP synthase complex"/>
    <property type="evidence" value="ECO:0007669"/>
    <property type="project" value="UniProtKB-KW"/>
</dbReference>
<dbReference type="GO" id="GO:0046933">
    <property type="term" value="F:proton-transporting ATP synthase activity, rotational mechanism"/>
    <property type="evidence" value="ECO:0007669"/>
    <property type="project" value="TreeGrafter"/>
</dbReference>
<dbReference type="CDD" id="cd00310">
    <property type="entry name" value="ATP-synt_Fo_a_6"/>
    <property type="match status" value="1"/>
</dbReference>
<dbReference type="FunFam" id="1.20.120.220:FF:000003">
    <property type="entry name" value="ATP synthase subunit a"/>
    <property type="match status" value="1"/>
</dbReference>
<dbReference type="Gene3D" id="1.20.120.220">
    <property type="entry name" value="ATP synthase, F0 complex, subunit A"/>
    <property type="match status" value="1"/>
</dbReference>
<dbReference type="HAMAP" id="MF_01393">
    <property type="entry name" value="ATP_synth_a_bact"/>
    <property type="match status" value="1"/>
</dbReference>
<dbReference type="InterPro" id="IPR000568">
    <property type="entry name" value="ATP_synth_F0_asu"/>
</dbReference>
<dbReference type="InterPro" id="IPR023011">
    <property type="entry name" value="ATP_synth_F0_asu_AS"/>
</dbReference>
<dbReference type="InterPro" id="IPR045083">
    <property type="entry name" value="ATP_synth_F0_asu_bact/mt"/>
</dbReference>
<dbReference type="InterPro" id="IPR035908">
    <property type="entry name" value="F0_ATP_A_sf"/>
</dbReference>
<dbReference type="NCBIfam" id="TIGR01131">
    <property type="entry name" value="ATP_synt_6_or_A"/>
    <property type="match status" value="1"/>
</dbReference>
<dbReference type="PANTHER" id="PTHR11410">
    <property type="entry name" value="ATP SYNTHASE SUBUNIT A"/>
    <property type="match status" value="1"/>
</dbReference>
<dbReference type="PANTHER" id="PTHR11410:SF0">
    <property type="entry name" value="ATP SYNTHASE SUBUNIT A"/>
    <property type="match status" value="1"/>
</dbReference>
<dbReference type="Pfam" id="PF00119">
    <property type="entry name" value="ATP-synt_A"/>
    <property type="match status" value="1"/>
</dbReference>
<dbReference type="PRINTS" id="PR00123">
    <property type="entry name" value="ATPASEA"/>
</dbReference>
<dbReference type="SUPFAM" id="SSF81336">
    <property type="entry name" value="F1F0 ATP synthase subunit A"/>
    <property type="match status" value="1"/>
</dbReference>
<dbReference type="PROSITE" id="PS00449">
    <property type="entry name" value="ATPASE_A"/>
    <property type="match status" value="1"/>
</dbReference>
<comment type="function">
    <text evidence="1">Mitochondrial membrane ATP synthase (F(1)F(0) ATP synthase or Complex V) produces ATP from ADP in the presence of a proton gradient across the membrane which is generated by electron transport complexes of the respiratory chain. F-type ATPases consist of two structural domains, F(1) - containing the extramembraneous catalytic core and F(0) - containing the membrane proton channel, linked together by a central stalk and a peripheral stalk. During catalysis, ATP synthesis in the catalytic domain of F(1) is coupled via a rotary mechanism of the central stalk subunits to proton translocation. Key component of the proton channel; it may play a direct role in the translocation of protons across the membrane (By similarity).</text>
</comment>
<comment type="subunit">
    <text evidence="1">F-type ATPases have 2 components, CF(1) - the catalytic core - and CF(0) - the membrane proton channel. CF(1) has five subunits: alpha(3), beta(3), gamma(1), delta(1), epsilon(1). CF(0) has three main subunits: a, b and c (By similarity).</text>
</comment>
<comment type="subcellular location">
    <subcellularLocation>
        <location>Mitochondrion inner membrane</location>
        <topology>Multi-pass membrane protein</topology>
    </subcellularLocation>
</comment>
<comment type="similarity">
    <text evidence="3">Belongs to the ATPase A chain family.</text>
</comment>
<gene>
    <name type="primary">ATP6</name>
</gene>
<sequence length="256" mass="28417">MLNLFITSPLDQFEIRVLMGFTSPLLDFSSLNFTTFSLYTIIVLFTVLGLNLLTTNNNKIIGSKWFVSQEAIYDTILNMVKGQIGGKLWGYYFPLVYTFFFFIFVSNLISMIPYSFALSAHLIFIVSLSSVIWLGATIIGLTKHGLVFFSLFVPGGTPLPLVPLLVLIELLSYFARAISLGLRLSSNVLSGHLLLIILGGLLFNLMSMSIITFVFGLIPGVGLLAIVVLEFAISVIQAYVWSILTSSYLKDVLYLH</sequence>
<name>ATP6_KLULA</name>
<organism>
    <name type="scientific">Kluyveromyces lactis (strain ATCC 8585 / CBS 2359 / DSM 70799 / NBRC 1267 / NRRL Y-1140 / WM37)</name>
    <name type="common">Yeast</name>
    <name type="synonym">Candida sphaerica</name>
    <dbReference type="NCBI Taxonomy" id="284590"/>
    <lineage>
        <taxon>Eukaryota</taxon>
        <taxon>Fungi</taxon>
        <taxon>Dikarya</taxon>
        <taxon>Ascomycota</taxon>
        <taxon>Saccharomycotina</taxon>
        <taxon>Saccharomycetes</taxon>
        <taxon>Saccharomycetales</taxon>
        <taxon>Saccharomycetaceae</taxon>
        <taxon>Kluyveromyces</taxon>
    </lineage>
</organism>
<geneLocation type="mitochondrion"/>
<evidence type="ECO:0000250" key="1"/>
<evidence type="ECO:0000255" key="2"/>
<evidence type="ECO:0000305" key="3"/>
<reference key="1">
    <citation type="journal article" date="2005" name="FEMS Yeast Res.">
        <title>Complete nucleotide sequence of the mitochondrial DNA from Kluyveromyces lactis.</title>
        <authorList>
            <person name="Zivanovic Y."/>
            <person name="Wincker P."/>
            <person name="Vacherie B."/>
            <person name="Bolotin-Fukuhara M."/>
            <person name="Fukuhara H."/>
        </authorList>
    </citation>
    <scope>NUCLEOTIDE SEQUENCE [LARGE SCALE GENOMIC DNA]</scope>
    <source>
        <strain>ATCC 76492 / CBS 2359/152 / CLIB 210</strain>
    </source>
</reference>